<feature type="chain" id="PRO_0000158154" description="Imidazoleglycerol-phosphate dehydratase">
    <location>
        <begin position="1"/>
        <end position="209"/>
    </location>
</feature>
<accession>Q7V4R6</accession>
<reference key="1">
    <citation type="journal article" date="2003" name="Nature">
        <title>Genome divergence in two Prochlorococcus ecotypes reflects oceanic niche differentiation.</title>
        <authorList>
            <person name="Rocap G."/>
            <person name="Larimer F.W."/>
            <person name="Lamerdin J.E."/>
            <person name="Malfatti S."/>
            <person name="Chain P."/>
            <person name="Ahlgren N.A."/>
            <person name="Arellano A."/>
            <person name="Coleman M."/>
            <person name="Hauser L."/>
            <person name="Hess W.R."/>
            <person name="Johnson Z.I."/>
            <person name="Land M.L."/>
            <person name="Lindell D."/>
            <person name="Post A.F."/>
            <person name="Regala W."/>
            <person name="Shah M."/>
            <person name="Shaw S.L."/>
            <person name="Steglich C."/>
            <person name="Sullivan M.B."/>
            <person name="Ting C.S."/>
            <person name="Tolonen A."/>
            <person name="Webb E.A."/>
            <person name="Zinser E.R."/>
            <person name="Chisholm S.W."/>
        </authorList>
    </citation>
    <scope>NUCLEOTIDE SEQUENCE [LARGE SCALE GENOMIC DNA]</scope>
    <source>
        <strain>MIT 9313</strain>
    </source>
</reference>
<sequence>MGIMTSLRQGDVHRVTAETDVLVRVGLDGCGQCNVSTGVAFLDHMLHQLSSHGLLDLEITATGDTHIDDHHTNEDVGIAVGQALSQALGDRRGIHRFGHFVAPLDEALVQVVLDCSGRPHLSYGLQIPAERIGSYDSELVKEFFVAVVNNSGLTLHIRQLAGTNSHHIVEACFKAFARALRMAIEIDPRRAGAVPSSKGVLEQAGGQKS</sequence>
<keyword id="KW-0028">Amino-acid biosynthesis</keyword>
<keyword id="KW-0963">Cytoplasm</keyword>
<keyword id="KW-0368">Histidine biosynthesis</keyword>
<keyword id="KW-0456">Lyase</keyword>
<keyword id="KW-1185">Reference proteome</keyword>
<dbReference type="EC" id="4.2.1.19" evidence="1"/>
<dbReference type="EMBL" id="BX548175">
    <property type="protein sequence ID" value="CAE22055.1"/>
    <property type="molecule type" value="Genomic_DNA"/>
</dbReference>
<dbReference type="RefSeq" id="WP_011131246.1">
    <property type="nucleotide sequence ID" value="NC_005071.1"/>
</dbReference>
<dbReference type="SMR" id="Q7V4R6"/>
<dbReference type="KEGG" id="pmt:PMT_1880"/>
<dbReference type="eggNOG" id="COG0131">
    <property type="taxonomic scope" value="Bacteria"/>
</dbReference>
<dbReference type="HOGENOM" id="CLU_044308_3_0_3"/>
<dbReference type="OrthoDB" id="9790411at2"/>
<dbReference type="UniPathway" id="UPA00031">
    <property type="reaction ID" value="UER00011"/>
</dbReference>
<dbReference type="Proteomes" id="UP000001423">
    <property type="component" value="Chromosome"/>
</dbReference>
<dbReference type="GO" id="GO:0005737">
    <property type="term" value="C:cytoplasm"/>
    <property type="evidence" value="ECO:0007669"/>
    <property type="project" value="UniProtKB-SubCell"/>
</dbReference>
<dbReference type="GO" id="GO:0004424">
    <property type="term" value="F:imidazoleglycerol-phosphate dehydratase activity"/>
    <property type="evidence" value="ECO:0007669"/>
    <property type="project" value="UniProtKB-UniRule"/>
</dbReference>
<dbReference type="GO" id="GO:0000105">
    <property type="term" value="P:L-histidine biosynthetic process"/>
    <property type="evidence" value="ECO:0007669"/>
    <property type="project" value="UniProtKB-UniRule"/>
</dbReference>
<dbReference type="CDD" id="cd07914">
    <property type="entry name" value="IGPD"/>
    <property type="match status" value="1"/>
</dbReference>
<dbReference type="FunFam" id="3.30.230.40:FF:000002">
    <property type="entry name" value="Imidazoleglycerol-phosphate dehydratase"/>
    <property type="match status" value="1"/>
</dbReference>
<dbReference type="FunFam" id="3.30.230.40:FF:000003">
    <property type="entry name" value="Imidazoleglycerol-phosphate dehydratase HisB"/>
    <property type="match status" value="1"/>
</dbReference>
<dbReference type="Gene3D" id="3.30.230.40">
    <property type="entry name" value="Imidazole glycerol phosphate dehydratase, domain 1"/>
    <property type="match status" value="2"/>
</dbReference>
<dbReference type="HAMAP" id="MF_00076">
    <property type="entry name" value="HisB"/>
    <property type="match status" value="1"/>
</dbReference>
<dbReference type="InterPro" id="IPR038494">
    <property type="entry name" value="IGPD_sf"/>
</dbReference>
<dbReference type="InterPro" id="IPR000807">
    <property type="entry name" value="ImidazoleglycerolP_deHydtase"/>
</dbReference>
<dbReference type="InterPro" id="IPR020565">
    <property type="entry name" value="ImidazoleglycerP_deHydtase_CS"/>
</dbReference>
<dbReference type="InterPro" id="IPR020568">
    <property type="entry name" value="Ribosomal_Su5_D2-typ_SF"/>
</dbReference>
<dbReference type="NCBIfam" id="NF002108">
    <property type="entry name" value="PRK00951.1-3"/>
    <property type="match status" value="1"/>
</dbReference>
<dbReference type="NCBIfam" id="NF002109">
    <property type="entry name" value="PRK00951.1-5"/>
    <property type="match status" value="1"/>
</dbReference>
<dbReference type="NCBIfam" id="NF002111">
    <property type="entry name" value="PRK00951.2-1"/>
    <property type="match status" value="1"/>
</dbReference>
<dbReference type="NCBIfam" id="NF002114">
    <property type="entry name" value="PRK00951.2-4"/>
    <property type="match status" value="1"/>
</dbReference>
<dbReference type="PANTHER" id="PTHR23133:SF2">
    <property type="entry name" value="IMIDAZOLEGLYCEROL-PHOSPHATE DEHYDRATASE"/>
    <property type="match status" value="1"/>
</dbReference>
<dbReference type="PANTHER" id="PTHR23133">
    <property type="entry name" value="IMIDAZOLEGLYCEROL-PHOSPHATE DEHYDRATASE HIS7"/>
    <property type="match status" value="1"/>
</dbReference>
<dbReference type="Pfam" id="PF00475">
    <property type="entry name" value="IGPD"/>
    <property type="match status" value="1"/>
</dbReference>
<dbReference type="SUPFAM" id="SSF54211">
    <property type="entry name" value="Ribosomal protein S5 domain 2-like"/>
    <property type="match status" value="2"/>
</dbReference>
<dbReference type="PROSITE" id="PS00954">
    <property type="entry name" value="IGP_DEHYDRATASE_1"/>
    <property type="match status" value="1"/>
</dbReference>
<dbReference type="PROSITE" id="PS00955">
    <property type="entry name" value="IGP_DEHYDRATASE_2"/>
    <property type="match status" value="1"/>
</dbReference>
<proteinExistence type="inferred from homology"/>
<evidence type="ECO:0000255" key="1">
    <source>
        <dbReference type="HAMAP-Rule" id="MF_00076"/>
    </source>
</evidence>
<gene>
    <name evidence="1" type="primary">hisB</name>
    <name type="ordered locus">PMT_1880</name>
</gene>
<name>HIS7_PROMM</name>
<comment type="catalytic activity">
    <reaction evidence="1">
        <text>D-erythro-1-(imidazol-4-yl)glycerol 3-phosphate = 3-(imidazol-4-yl)-2-oxopropyl phosphate + H2O</text>
        <dbReference type="Rhea" id="RHEA:11040"/>
        <dbReference type="ChEBI" id="CHEBI:15377"/>
        <dbReference type="ChEBI" id="CHEBI:57766"/>
        <dbReference type="ChEBI" id="CHEBI:58278"/>
        <dbReference type="EC" id="4.2.1.19"/>
    </reaction>
</comment>
<comment type="pathway">
    <text evidence="1">Amino-acid biosynthesis; L-histidine biosynthesis; L-histidine from 5-phospho-alpha-D-ribose 1-diphosphate: step 6/9.</text>
</comment>
<comment type="subcellular location">
    <subcellularLocation>
        <location evidence="1">Cytoplasm</location>
    </subcellularLocation>
</comment>
<comment type="similarity">
    <text evidence="1">Belongs to the imidazoleglycerol-phosphate dehydratase family.</text>
</comment>
<organism>
    <name type="scientific">Prochlorococcus marinus (strain MIT 9313)</name>
    <dbReference type="NCBI Taxonomy" id="74547"/>
    <lineage>
        <taxon>Bacteria</taxon>
        <taxon>Bacillati</taxon>
        <taxon>Cyanobacteriota</taxon>
        <taxon>Cyanophyceae</taxon>
        <taxon>Synechococcales</taxon>
        <taxon>Prochlorococcaceae</taxon>
        <taxon>Prochlorococcus</taxon>
    </lineage>
</organism>
<protein>
    <recommendedName>
        <fullName evidence="1">Imidazoleglycerol-phosphate dehydratase</fullName>
        <shortName evidence="1">IGPD</shortName>
        <ecNumber evidence="1">4.2.1.19</ecNumber>
    </recommendedName>
</protein>